<sequence length="276" mass="30253">MGIKKYNPTTNGRRNMTTNDFAEITTDRPEKSLLAPLSKKAGRNNQGKITVRHQGGGHKRQYRIIDFKRNKDGIPGRVATIEYDPNRSANIALINYVDGEKRYILAPKNLEVGMEIMSGAEADIKIGNALPLINIPVGTVVHNIELKPGRGGQLVRSAGTSAQVLGKEGKYVLVRLTSGEVRLVLSACRATVGQVGNESHELIKIGKAGRSRWLGKRPTVRGSVMNPVDHPHGGGEGRSPIGRKSPMSPWGKPTLGFKTRKKNKASDKFIVRRRKK</sequence>
<name>RL2_BACC0</name>
<accession>B7JKC2</accession>
<protein>
    <recommendedName>
        <fullName evidence="1">Large ribosomal subunit protein uL2</fullName>
    </recommendedName>
    <alternativeName>
        <fullName evidence="3">50S ribosomal protein L2</fullName>
    </alternativeName>
</protein>
<comment type="function">
    <text evidence="1">One of the primary rRNA binding proteins. Required for association of the 30S and 50S subunits to form the 70S ribosome, for tRNA binding and peptide bond formation. It has been suggested to have peptidyltransferase activity; this is somewhat controversial. Makes several contacts with the 16S rRNA in the 70S ribosome.</text>
</comment>
<comment type="subunit">
    <text evidence="1">Part of the 50S ribosomal subunit. Forms a bridge to the 30S subunit in the 70S ribosome.</text>
</comment>
<comment type="similarity">
    <text evidence="1">Belongs to the universal ribosomal protein uL2 family.</text>
</comment>
<keyword id="KW-0687">Ribonucleoprotein</keyword>
<keyword id="KW-0689">Ribosomal protein</keyword>
<keyword id="KW-0694">RNA-binding</keyword>
<keyword id="KW-0699">rRNA-binding</keyword>
<organism>
    <name type="scientific">Bacillus cereus (strain AH820)</name>
    <dbReference type="NCBI Taxonomy" id="405535"/>
    <lineage>
        <taxon>Bacteria</taxon>
        <taxon>Bacillati</taxon>
        <taxon>Bacillota</taxon>
        <taxon>Bacilli</taxon>
        <taxon>Bacillales</taxon>
        <taxon>Bacillaceae</taxon>
        <taxon>Bacillus</taxon>
        <taxon>Bacillus cereus group</taxon>
    </lineage>
</organism>
<reference key="1">
    <citation type="submission" date="2008-10" db="EMBL/GenBank/DDBJ databases">
        <title>Genome sequence of Bacillus cereus AH820.</title>
        <authorList>
            <person name="Dodson R.J."/>
            <person name="Durkin A.S."/>
            <person name="Rosovitz M.J."/>
            <person name="Rasko D.A."/>
            <person name="Hoffmaster A."/>
            <person name="Ravel J."/>
            <person name="Sutton G."/>
        </authorList>
    </citation>
    <scope>NUCLEOTIDE SEQUENCE [LARGE SCALE GENOMIC DNA]</scope>
    <source>
        <strain>AH820</strain>
    </source>
</reference>
<evidence type="ECO:0000255" key="1">
    <source>
        <dbReference type="HAMAP-Rule" id="MF_01320"/>
    </source>
</evidence>
<evidence type="ECO:0000256" key="2">
    <source>
        <dbReference type="SAM" id="MobiDB-lite"/>
    </source>
</evidence>
<evidence type="ECO:0000305" key="3"/>
<proteinExistence type="inferred from homology"/>
<feature type="chain" id="PRO_1000141503" description="Large ribosomal subunit protein uL2">
    <location>
        <begin position="1"/>
        <end position="276"/>
    </location>
</feature>
<feature type="region of interest" description="Disordered" evidence="2">
    <location>
        <begin position="1"/>
        <end position="20"/>
    </location>
</feature>
<feature type="region of interest" description="Disordered" evidence="2">
    <location>
        <begin position="219"/>
        <end position="276"/>
    </location>
</feature>
<feature type="compositionally biased region" description="Polar residues" evidence="2">
    <location>
        <begin position="7"/>
        <end position="20"/>
    </location>
</feature>
<dbReference type="EMBL" id="CP001283">
    <property type="protein sequence ID" value="ACK89522.1"/>
    <property type="molecule type" value="Genomic_DNA"/>
</dbReference>
<dbReference type="RefSeq" id="WP_000511580.1">
    <property type="nucleotide sequence ID" value="NC_011773.1"/>
</dbReference>
<dbReference type="SMR" id="B7JKC2"/>
<dbReference type="GeneID" id="93010940"/>
<dbReference type="KEGG" id="bcu:BCAH820_0125"/>
<dbReference type="HOGENOM" id="CLU_036235_2_1_9"/>
<dbReference type="Proteomes" id="UP000001363">
    <property type="component" value="Chromosome"/>
</dbReference>
<dbReference type="GO" id="GO:0015934">
    <property type="term" value="C:large ribosomal subunit"/>
    <property type="evidence" value="ECO:0007669"/>
    <property type="project" value="InterPro"/>
</dbReference>
<dbReference type="GO" id="GO:0019843">
    <property type="term" value="F:rRNA binding"/>
    <property type="evidence" value="ECO:0007669"/>
    <property type="project" value="UniProtKB-UniRule"/>
</dbReference>
<dbReference type="GO" id="GO:0003735">
    <property type="term" value="F:structural constituent of ribosome"/>
    <property type="evidence" value="ECO:0007669"/>
    <property type="project" value="InterPro"/>
</dbReference>
<dbReference type="GO" id="GO:0016740">
    <property type="term" value="F:transferase activity"/>
    <property type="evidence" value="ECO:0007669"/>
    <property type="project" value="InterPro"/>
</dbReference>
<dbReference type="GO" id="GO:0002181">
    <property type="term" value="P:cytoplasmic translation"/>
    <property type="evidence" value="ECO:0007669"/>
    <property type="project" value="TreeGrafter"/>
</dbReference>
<dbReference type="FunFam" id="2.30.30.30:FF:000001">
    <property type="entry name" value="50S ribosomal protein L2"/>
    <property type="match status" value="1"/>
</dbReference>
<dbReference type="FunFam" id="2.40.50.140:FF:000003">
    <property type="entry name" value="50S ribosomal protein L2"/>
    <property type="match status" value="1"/>
</dbReference>
<dbReference type="FunFam" id="4.10.950.10:FF:000001">
    <property type="entry name" value="50S ribosomal protein L2"/>
    <property type="match status" value="1"/>
</dbReference>
<dbReference type="Gene3D" id="2.30.30.30">
    <property type="match status" value="1"/>
</dbReference>
<dbReference type="Gene3D" id="2.40.50.140">
    <property type="entry name" value="Nucleic acid-binding proteins"/>
    <property type="match status" value="1"/>
</dbReference>
<dbReference type="Gene3D" id="4.10.950.10">
    <property type="entry name" value="Ribosomal protein L2, domain 3"/>
    <property type="match status" value="1"/>
</dbReference>
<dbReference type="HAMAP" id="MF_01320_B">
    <property type="entry name" value="Ribosomal_uL2_B"/>
    <property type="match status" value="1"/>
</dbReference>
<dbReference type="InterPro" id="IPR012340">
    <property type="entry name" value="NA-bd_OB-fold"/>
</dbReference>
<dbReference type="InterPro" id="IPR014722">
    <property type="entry name" value="Rib_uL2_dom2"/>
</dbReference>
<dbReference type="InterPro" id="IPR002171">
    <property type="entry name" value="Ribosomal_uL2"/>
</dbReference>
<dbReference type="InterPro" id="IPR005880">
    <property type="entry name" value="Ribosomal_uL2_bac/org-type"/>
</dbReference>
<dbReference type="InterPro" id="IPR022669">
    <property type="entry name" value="Ribosomal_uL2_C"/>
</dbReference>
<dbReference type="InterPro" id="IPR022671">
    <property type="entry name" value="Ribosomal_uL2_CS"/>
</dbReference>
<dbReference type="InterPro" id="IPR014726">
    <property type="entry name" value="Ribosomal_uL2_dom3"/>
</dbReference>
<dbReference type="InterPro" id="IPR022666">
    <property type="entry name" value="Ribosomal_uL2_RNA-bd_dom"/>
</dbReference>
<dbReference type="InterPro" id="IPR008991">
    <property type="entry name" value="Translation_prot_SH3-like_sf"/>
</dbReference>
<dbReference type="NCBIfam" id="TIGR01171">
    <property type="entry name" value="rplB_bact"/>
    <property type="match status" value="1"/>
</dbReference>
<dbReference type="PANTHER" id="PTHR13691:SF5">
    <property type="entry name" value="LARGE RIBOSOMAL SUBUNIT PROTEIN UL2M"/>
    <property type="match status" value="1"/>
</dbReference>
<dbReference type="PANTHER" id="PTHR13691">
    <property type="entry name" value="RIBOSOMAL PROTEIN L2"/>
    <property type="match status" value="1"/>
</dbReference>
<dbReference type="Pfam" id="PF00181">
    <property type="entry name" value="Ribosomal_L2"/>
    <property type="match status" value="1"/>
</dbReference>
<dbReference type="Pfam" id="PF03947">
    <property type="entry name" value="Ribosomal_L2_C"/>
    <property type="match status" value="1"/>
</dbReference>
<dbReference type="PIRSF" id="PIRSF002158">
    <property type="entry name" value="Ribosomal_L2"/>
    <property type="match status" value="1"/>
</dbReference>
<dbReference type="SMART" id="SM01383">
    <property type="entry name" value="Ribosomal_L2"/>
    <property type="match status" value="1"/>
</dbReference>
<dbReference type="SMART" id="SM01382">
    <property type="entry name" value="Ribosomal_L2_C"/>
    <property type="match status" value="1"/>
</dbReference>
<dbReference type="SUPFAM" id="SSF50249">
    <property type="entry name" value="Nucleic acid-binding proteins"/>
    <property type="match status" value="1"/>
</dbReference>
<dbReference type="SUPFAM" id="SSF50104">
    <property type="entry name" value="Translation proteins SH3-like domain"/>
    <property type="match status" value="1"/>
</dbReference>
<dbReference type="PROSITE" id="PS00467">
    <property type="entry name" value="RIBOSOMAL_L2"/>
    <property type="match status" value="1"/>
</dbReference>
<gene>
    <name evidence="1" type="primary">rplB</name>
    <name type="ordered locus">BCAH820_0125</name>
</gene>